<protein>
    <recommendedName>
        <fullName evidence="1">Probable transaldolase</fullName>
        <ecNumber evidence="1">2.2.1.2</ecNumber>
    </recommendedName>
</protein>
<gene>
    <name evidence="1" type="primary">tal</name>
    <name type="ordered locus">SZO_03700</name>
</gene>
<feature type="chain" id="PRO_1000206475" description="Probable transaldolase">
    <location>
        <begin position="1"/>
        <end position="214"/>
    </location>
</feature>
<feature type="active site" description="Schiff-base intermediate with substrate" evidence="1">
    <location>
        <position position="83"/>
    </location>
</feature>
<evidence type="ECO:0000255" key="1">
    <source>
        <dbReference type="HAMAP-Rule" id="MF_00494"/>
    </source>
</evidence>
<proteinExistence type="inferred from homology"/>
<keyword id="KW-0963">Cytoplasm</keyword>
<keyword id="KW-0570">Pentose shunt</keyword>
<keyword id="KW-0704">Schiff base</keyword>
<keyword id="KW-0808">Transferase</keyword>
<sequence length="214" mass="23209">MKFFLDTANVEAIRAINELGVVDGVTTNPSIISREGRDFETVIKEICEIVDGPISAEVTGLTAEEMIAEARSIAKWHDNVVVKIPMTTEGLKATNVLSQEGIKTNVTLIFTVSQGLMAMKAGATYISPFIGRLEDIGADPYQLISDLRGIIDLYGFQAEIIAASIRTAAHVEAVAQLGAHIATIPDPLFAKMTEHPLTTNGLKTFMEDWASFKQ</sequence>
<accession>C0MGU8</accession>
<reference key="1">
    <citation type="journal article" date="2009" name="PLoS Pathog.">
        <title>Genomic evidence for the evolution of Streptococcus equi: host restriction, increased virulence, and genetic exchange with human pathogens.</title>
        <authorList>
            <person name="Holden M.T.G."/>
            <person name="Heather Z."/>
            <person name="Paillot R."/>
            <person name="Steward K.F."/>
            <person name="Webb K."/>
            <person name="Ainslie F."/>
            <person name="Jourdan T."/>
            <person name="Bason N.C."/>
            <person name="Holroyd N.E."/>
            <person name="Mungall K."/>
            <person name="Quail M.A."/>
            <person name="Sanders M."/>
            <person name="Simmonds M."/>
            <person name="Willey D."/>
            <person name="Brooks K."/>
            <person name="Aanensen D.M."/>
            <person name="Spratt B.G."/>
            <person name="Jolley K.A."/>
            <person name="Maiden M.C.J."/>
            <person name="Kehoe M."/>
            <person name="Chanter N."/>
            <person name="Bentley S.D."/>
            <person name="Robinson C."/>
            <person name="Maskell D.J."/>
            <person name="Parkhill J."/>
            <person name="Waller A.S."/>
        </authorList>
    </citation>
    <scope>NUCLEOTIDE SEQUENCE [LARGE SCALE GENOMIC DNA]</scope>
    <source>
        <strain>H70</strain>
    </source>
</reference>
<comment type="function">
    <text evidence="1">Transaldolase is important for the balance of metabolites in the pentose-phosphate pathway.</text>
</comment>
<comment type="catalytic activity">
    <reaction evidence="1">
        <text>D-sedoheptulose 7-phosphate + D-glyceraldehyde 3-phosphate = D-erythrose 4-phosphate + beta-D-fructose 6-phosphate</text>
        <dbReference type="Rhea" id="RHEA:17053"/>
        <dbReference type="ChEBI" id="CHEBI:16897"/>
        <dbReference type="ChEBI" id="CHEBI:57483"/>
        <dbReference type="ChEBI" id="CHEBI:57634"/>
        <dbReference type="ChEBI" id="CHEBI:59776"/>
        <dbReference type="EC" id="2.2.1.2"/>
    </reaction>
</comment>
<comment type="pathway">
    <text evidence="1">Carbohydrate degradation; pentose phosphate pathway; D-glyceraldehyde 3-phosphate and beta-D-fructose 6-phosphate from D-ribose 5-phosphate and D-xylulose 5-phosphate (non-oxidative stage): step 2/3.</text>
</comment>
<comment type="subcellular location">
    <subcellularLocation>
        <location evidence="1">Cytoplasm</location>
    </subcellularLocation>
</comment>
<comment type="similarity">
    <text evidence="1">Belongs to the transaldolase family. Type 3B subfamily.</text>
</comment>
<organism>
    <name type="scientific">Streptococcus equi subsp. zooepidemicus (strain H70)</name>
    <dbReference type="NCBI Taxonomy" id="553483"/>
    <lineage>
        <taxon>Bacteria</taxon>
        <taxon>Bacillati</taxon>
        <taxon>Bacillota</taxon>
        <taxon>Bacilli</taxon>
        <taxon>Lactobacillales</taxon>
        <taxon>Streptococcaceae</taxon>
        <taxon>Streptococcus</taxon>
    </lineage>
</organism>
<name>TAL_STRS7</name>
<dbReference type="EC" id="2.2.1.2" evidence="1"/>
<dbReference type="EMBL" id="FM204884">
    <property type="protein sequence ID" value="CAW98229.1"/>
    <property type="molecule type" value="Genomic_DNA"/>
</dbReference>
<dbReference type="SMR" id="C0MGU8"/>
<dbReference type="KEGG" id="seq:SZO_03700"/>
<dbReference type="eggNOG" id="COG0176">
    <property type="taxonomic scope" value="Bacteria"/>
</dbReference>
<dbReference type="HOGENOM" id="CLU_079764_0_0_9"/>
<dbReference type="UniPathway" id="UPA00115">
    <property type="reaction ID" value="UER00414"/>
</dbReference>
<dbReference type="Proteomes" id="UP000001368">
    <property type="component" value="Chromosome"/>
</dbReference>
<dbReference type="GO" id="GO:0005737">
    <property type="term" value="C:cytoplasm"/>
    <property type="evidence" value="ECO:0007669"/>
    <property type="project" value="UniProtKB-SubCell"/>
</dbReference>
<dbReference type="GO" id="GO:0016832">
    <property type="term" value="F:aldehyde-lyase activity"/>
    <property type="evidence" value="ECO:0007669"/>
    <property type="project" value="InterPro"/>
</dbReference>
<dbReference type="GO" id="GO:0004801">
    <property type="term" value="F:transaldolase activity"/>
    <property type="evidence" value="ECO:0007669"/>
    <property type="project" value="UniProtKB-UniRule"/>
</dbReference>
<dbReference type="GO" id="GO:0005975">
    <property type="term" value="P:carbohydrate metabolic process"/>
    <property type="evidence" value="ECO:0007669"/>
    <property type="project" value="InterPro"/>
</dbReference>
<dbReference type="GO" id="GO:0006098">
    <property type="term" value="P:pentose-phosphate shunt"/>
    <property type="evidence" value="ECO:0007669"/>
    <property type="project" value="UniProtKB-UniRule"/>
</dbReference>
<dbReference type="CDD" id="cd00956">
    <property type="entry name" value="Transaldolase_FSA"/>
    <property type="match status" value="1"/>
</dbReference>
<dbReference type="FunFam" id="3.20.20.70:FF:000018">
    <property type="entry name" value="Probable transaldolase"/>
    <property type="match status" value="1"/>
</dbReference>
<dbReference type="Gene3D" id="3.20.20.70">
    <property type="entry name" value="Aldolase class I"/>
    <property type="match status" value="1"/>
</dbReference>
<dbReference type="HAMAP" id="MF_00494">
    <property type="entry name" value="Transaldolase_3b"/>
    <property type="match status" value="1"/>
</dbReference>
<dbReference type="InterPro" id="IPR013785">
    <property type="entry name" value="Aldolase_TIM"/>
</dbReference>
<dbReference type="InterPro" id="IPR001585">
    <property type="entry name" value="TAL/FSA"/>
</dbReference>
<dbReference type="InterPro" id="IPR022999">
    <property type="entry name" value="Transaldolase_3B"/>
</dbReference>
<dbReference type="InterPro" id="IPR004731">
    <property type="entry name" value="Transaldolase_3B/F6P_aldolase"/>
</dbReference>
<dbReference type="InterPro" id="IPR018225">
    <property type="entry name" value="Transaldolase_AS"/>
</dbReference>
<dbReference type="InterPro" id="IPR033919">
    <property type="entry name" value="TSA/FSA_arc/bac"/>
</dbReference>
<dbReference type="NCBIfam" id="TIGR00875">
    <property type="entry name" value="fsa_talC_mipB"/>
    <property type="match status" value="1"/>
</dbReference>
<dbReference type="PANTHER" id="PTHR10683">
    <property type="entry name" value="TRANSALDOLASE"/>
    <property type="match status" value="1"/>
</dbReference>
<dbReference type="PANTHER" id="PTHR10683:SF36">
    <property type="entry name" value="TRANSALDOLASE"/>
    <property type="match status" value="1"/>
</dbReference>
<dbReference type="Pfam" id="PF00923">
    <property type="entry name" value="TAL_FSA"/>
    <property type="match status" value="1"/>
</dbReference>
<dbReference type="SUPFAM" id="SSF51569">
    <property type="entry name" value="Aldolase"/>
    <property type="match status" value="1"/>
</dbReference>
<dbReference type="PROSITE" id="PS01054">
    <property type="entry name" value="TRANSALDOLASE_1"/>
    <property type="match status" value="1"/>
</dbReference>
<dbReference type="PROSITE" id="PS00958">
    <property type="entry name" value="TRANSALDOLASE_2"/>
    <property type="match status" value="1"/>
</dbReference>